<organism>
    <name type="scientific">Salmonella paratyphi B (strain ATCC BAA-1250 / SPB7)</name>
    <dbReference type="NCBI Taxonomy" id="1016998"/>
    <lineage>
        <taxon>Bacteria</taxon>
        <taxon>Pseudomonadati</taxon>
        <taxon>Pseudomonadota</taxon>
        <taxon>Gammaproteobacteria</taxon>
        <taxon>Enterobacterales</taxon>
        <taxon>Enterobacteriaceae</taxon>
        <taxon>Salmonella</taxon>
    </lineage>
</organism>
<feature type="chain" id="PRO_1000083643" description="Protein ApaG">
    <location>
        <begin position="1"/>
        <end position="125"/>
    </location>
</feature>
<feature type="domain" description="ApaG" evidence="1">
    <location>
        <begin position="1"/>
        <end position="125"/>
    </location>
</feature>
<protein>
    <recommendedName>
        <fullName evidence="1">Protein ApaG</fullName>
    </recommendedName>
</protein>
<name>APAG_SALPB</name>
<evidence type="ECO:0000255" key="1">
    <source>
        <dbReference type="HAMAP-Rule" id="MF_00791"/>
    </source>
</evidence>
<dbReference type="EMBL" id="CP000886">
    <property type="protein sequence ID" value="ABX65557.1"/>
    <property type="molecule type" value="Genomic_DNA"/>
</dbReference>
<dbReference type="RefSeq" id="WP_000610894.1">
    <property type="nucleotide sequence ID" value="NC_010102.1"/>
</dbReference>
<dbReference type="SMR" id="A9MYM3"/>
<dbReference type="GeneID" id="66754612"/>
<dbReference type="KEGG" id="spq:SPAB_00114"/>
<dbReference type="PATRIC" id="fig|1016998.12.peg.108"/>
<dbReference type="HOGENOM" id="CLU_128074_0_0_6"/>
<dbReference type="BioCyc" id="SENT1016998:SPAB_RS00445-MONOMER"/>
<dbReference type="Proteomes" id="UP000008556">
    <property type="component" value="Chromosome"/>
</dbReference>
<dbReference type="GO" id="GO:0070987">
    <property type="term" value="P:error-free translesion synthesis"/>
    <property type="evidence" value="ECO:0007669"/>
    <property type="project" value="TreeGrafter"/>
</dbReference>
<dbReference type="Gene3D" id="2.60.40.1470">
    <property type="entry name" value="ApaG domain"/>
    <property type="match status" value="1"/>
</dbReference>
<dbReference type="HAMAP" id="MF_00791">
    <property type="entry name" value="ApaG"/>
    <property type="match status" value="1"/>
</dbReference>
<dbReference type="InterPro" id="IPR007474">
    <property type="entry name" value="ApaG_domain"/>
</dbReference>
<dbReference type="InterPro" id="IPR036767">
    <property type="entry name" value="ApaG_sf"/>
</dbReference>
<dbReference type="InterPro" id="IPR023065">
    <property type="entry name" value="Uncharacterised_ApaG"/>
</dbReference>
<dbReference type="NCBIfam" id="NF003967">
    <property type="entry name" value="PRK05461.1"/>
    <property type="match status" value="1"/>
</dbReference>
<dbReference type="PANTHER" id="PTHR14289">
    <property type="entry name" value="F-BOX ONLY PROTEIN 3"/>
    <property type="match status" value="1"/>
</dbReference>
<dbReference type="PANTHER" id="PTHR14289:SF16">
    <property type="entry name" value="POLYMERASE DELTA-INTERACTING PROTEIN 2"/>
    <property type="match status" value="1"/>
</dbReference>
<dbReference type="Pfam" id="PF04379">
    <property type="entry name" value="DUF525"/>
    <property type="match status" value="1"/>
</dbReference>
<dbReference type="SUPFAM" id="SSF110069">
    <property type="entry name" value="ApaG-like"/>
    <property type="match status" value="1"/>
</dbReference>
<dbReference type="PROSITE" id="PS51087">
    <property type="entry name" value="APAG"/>
    <property type="match status" value="1"/>
</dbReference>
<gene>
    <name evidence="1" type="primary">apaG</name>
    <name type="ordered locus">SPAB_00114</name>
</gene>
<reference key="1">
    <citation type="submission" date="2007-11" db="EMBL/GenBank/DDBJ databases">
        <authorList>
            <consortium name="The Salmonella enterica serovar Paratyphi B Genome Sequencing Project"/>
            <person name="McClelland M."/>
            <person name="Sanderson E.K."/>
            <person name="Porwollik S."/>
            <person name="Spieth J."/>
            <person name="Clifton W.S."/>
            <person name="Fulton R."/>
            <person name="Cordes M."/>
            <person name="Wollam A."/>
            <person name="Shah N."/>
            <person name="Pepin K."/>
            <person name="Bhonagiri V."/>
            <person name="Nash W."/>
            <person name="Johnson M."/>
            <person name="Thiruvilangam P."/>
            <person name="Wilson R."/>
        </authorList>
    </citation>
    <scope>NUCLEOTIDE SEQUENCE [LARGE SCALE GENOMIC DNA]</scope>
    <source>
        <strain>ATCC BAA-1250 / SPB7</strain>
    </source>
</reference>
<accession>A9MYM3</accession>
<sequence length="125" mass="13924">MINSPRVCIQVQSVYIEAQSSPDDERYVFAYTVTIRNLGRAPVQLLGRYWLITNGHGRETEVQGEGVVGVQPRIAPGEEYQYTSGAVIETPLGTMQGHYEMIDENGDAFTIDIPVFRLAVPTLIH</sequence>
<proteinExistence type="inferred from homology"/>